<feature type="chain" id="PRO_0000070945" description="Chaperone protein DnaJ">
    <location>
        <begin position="1"/>
        <end position="384"/>
    </location>
</feature>
<feature type="domain" description="J" evidence="1">
    <location>
        <begin position="4"/>
        <end position="68"/>
    </location>
</feature>
<feature type="repeat" description="CXXCXGXG motif">
    <location>
        <begin position="158"/>
        <end position="165"/>
    </location>
</feature>
<feature type="repeat" description="CXXCXGXG motif">
    <location>
        <begin position="175"/>
        <end position="182"/>
    </location>
</feature>
<feature type="repeat" description="CXXCXGXG motif">
    <location>
        <begin position="201"/>
        <end position="208"/>
    </location>
</feature>
<feature type="repeat" description="CXXCXGXG motif">
    <location>
        <begin position="215"/>
        <end position="222"/>
    </location>
</feature>
<feature type="zinc finger region" description="CR-type" evidence="1">
    <location>
        <begin position="145"/>
        <end position="227"/>
    </location>
</feature>
<feature type="region of interest" description="Disordered" evidence="2">
    <location>
        <begin position="29"/>
        <end position="60"/>
    </location>
</feature>
<feature type="region of interest" description="Disordered" evidence="2">
    <location>
        <begin position="73"/>
        <end position="131"/>
    </location>
</feature>
<feature type="region of interest" description="Disordered" evidence="2">
    <location>
        <begin position="160"/>
        <end position="191"/>
    </location>
</feature>
<feature type="compositionally biased region" description="Basic and acidic residues" evidence="2">
    <location>
        <begin position="42"/>
        <end position="60"/>
    </location>
</feature>
<feature type="compositionally biased region" description="Gly residues" evidence="2">
    <location>
        <begin position="80"/>
        <end position="101"/>
    </location>
</feature>
<feature type="compositionally biased region" description="Low complexity" evidence="2">
    <location>
        <begin position="102"/>
        <end position="111"/>
    </location>
</feature>
<feature type="compositionally biased region" description="Gly residues" evidence="2">
    <location>
        <begin position="112"/>
        <end position="121"/>
    </location>
</feature>
<feature type="compositionally biased region" description="Low complexity" evidence="2">
    <location>
        <begin position="180"/>
        <end position="190"/>
    </location>
</feature>
<feature type="binding site" evidence="1">
    <location>
        <position position="158"/>
    </location>
    <ligand>
        <name>Zn(2+)</name>
        <dbReference type="ChEBI" id="CHEBI:29105"/>
        <label>1</label>
    </ligand>
</feature>
<feature type="binding site" evidence="1">
    <location>
        <position position="161"/>
    </location>
    <ligand>
        <name>Zn(2+)</name>
        <dbReference type="ChEBI" id="CHEBI:29105"/>
        <label>1</label>
    </ligand>
</feature>
<feature type="binding site" evidence="1">
    <location>
        <position position="175"/>
    </location>
    <ligand>
        <name>Zn(2+)</name>
        <dbReference type="ChEBI" id="CHEBI:29105"/>
        <label>2</label>
    </ligand>
</feature>
<feature type="binding site" evidence="1">
    <location>
        <position position="178"/>
    </location>
    <ligand>
        <name>Zn(2+)</name>
        <dbReference type="ChEBI" id="CHEBI:29105"/>
        <label>2</label>
    </ligand>
</feature>
<feature type="binding site" evidence="1">
    <location>
        <position position="201"/>
    </location>
    <ligand>
        <name>Zn(2+)</name>
        <dbReference type="ChEBI" id="CHEBI:29105"/>
        <label>2</label>
    </ligand>
</feature>
<feature type="binding site" evidence="1">
    <location>
        <position position="204"/>
    </location>
    <ligand>
        <name>Zn(2+)</name>
        <dbReference type="ChEBI" id="CHEBI:29105"/>
        <label>2</label>
    </ligand>
</feature>
<feature type="binding site" evidence="1">
    <location>
        <position position="215"/>
    </location>
    <ligand>
        <name>Zn(2+)</name>
        <dbReference type="ChEBI" id="CHEBI:29105"/>
        <label>1</label>
    </ligand>
</feature>
<feature type="binding site" evidence="1">
    <location>
        <position position="218"/>
    </location>
    <ligand>
        <name>Zn(2+)</name>
        <dbReference type="ChEBI" id="CHEBI:29105"/>
        <label>1</label>
    </ligand>
</feature>
<protein>
    <recommendedName>
        <fullName evidence="1">Chaperone protein DnaJ</fullName>
    </recommendedName>
</protein>
<comment type="function">
    <text evidence="1">Participates actively in the response to hyperosmotic and heat shock by preventing the aggregation of stress-denatured proteins and by disaggregating proteins, also in an autonomous, DnaK-independent fashion. Unfolded proteins bind initially to DnaJ; upon interaction with the DnaJ-bound protein, DnaK hydrolyzes its bound ATP, resulting in the formation of a stable complex. GrpE releases ADP from DnaK; ATP binding to DnaK triggers the release of the substrate protein, thus completing the reaction cycle. Several rounds of ATP-dependent interactions between DnaJ, DnaK and GrpE are required for fully efficient folding. Also involved, together with DnaK and GrpE, in the DNA replication of plasmids through activation of initiation proteins.</text>
</comment>
<comment type="cofactor">
    <cofactor evidence="1">
        <name>Zn(2+)</name>
        <dbReference type="ChEBI" id="CHEBI:29105"/>
    </cofactor>
    <text evidence="1">Binds 2 Zn(2+) ions per monomer.</text>
</comment>
<comment type="subunit">
    <text evidence="1">Homodimer.</text>
</comment>
<comment type="subcellular location">
    <subcellularLocation>
        <location evidence="1">Cytoplasm</location>
    </subcellularLocation>
</comment>
<comment type="domain">
    <text evidence="1">The J domain is necessary and sufficient to stimulate DnaK ATPase activity. Zinc center 1 plays an important role in the autonomous, DnaK-independent chaperone activity of DnaJ. Zinc center 2 is essential for interaction with DnaK and for DnaJ activity.</text>
</comment>
<comment type="similarity">
    <text evidence="1">Belongs to the DnaJ family.</text>
</comment>
<sequence length="384" mass="41752">MSQDFYEILGVSRDASEDEIQEAYREKAREYHPDVSDDPDAEEKFKQAKKAKEVLTDEEKRQMYDQMGHERFEQAEKRGGAGGGGGRGGMGGDPFGGGAGGFDMQDIFDQFFGGGGRGGRGGSRRRQGQDLQTRLEIDLEEAYNGATKQLNVTRPEACDDCDGAGHPPGADSETCPECNGQGQTTQVQQTPMGRVQQRTTCRRCDGEGTLYDETCSTCRGNGVVQNDASLEVEIPSGIADGQTLRMEREGAPGENGGPNGDLLIEVQVRDHPDFERDGDSLQHQQAISFPQAVFGDTITVPTLDGEVEVDVPSGTQSGEVFRLEGKGMPRLRRRGHGDLYVQVQVVTPDSLNAEQKEALEQFAEAGGEEVDVDEGFFEKLKNSL</sequence>
<reference key="1">
    <citation type="journal article" date="2004" name="Genome Res.">
        <title>Genome sequence of Haloarcula marismortui: a halophilic archaeon from the Dead Sea.</title>
        <authorList>
            <person name="Baliga N.S."/>
            <person name="Bonneau R."/>
            <person name="Facciotti M.T."/>
            <person name="Pan M."/>
            <person name="Glusman G."/>
            <person name="Deutsch E.W."/>
            <person name="Shannon P."/>
            <person name="Chiu Y."/>
            <person name="Weng R.S."/>
            <person name="Gan R.R."/>
            <person name="Hung P."/>
            <person name="Date S.V."/>
            <person name="Marcotte E."/>
            <person name="Hood L."/>
            <person name="Ng W.V."/>
        </authorList>
    </citation>
    <scope>NUCLEOTIDE SEQUENCE [LARGE SCALE GENOMIC DNA]</scope>
    <source>
        <strain>ATCC 43049 / DSM 3752 / JCM 8966 / VKM B-1809</strain>
    </source>
</reference>
<gene>
    <name evidence="1" type="primary">dnaJ</name>
    <name type="ordered locus">rrnAC3334</name>
</gene>
<organism>
    <name type="scientific">Haloarcula marismortui (strain ATCC 43049 / DSM 3752 / JCM 8966 / VKM B-1809)</name>
    <name type="common">Halobacterium marismortui</name>
    <dbReference type="NCBI Taxonomy" id="272569"/>
    <lineage>
        <taxon>Archaea</taxon>
        <taxon>Methanobacteriati</taxon>
        <taxon>Methanobacteriota</taxon>
        <taxon>Stenosarchaea group</taxon>
        <taxon>Halobacteria</taxon>
        <taxon>Halobacteriales</taxon>
        <taxon>Haloarculaceae</taxon>
        <taxon>Haloarcula</taxon>
    </lineage>
</organism>
<keyword id="KW-0143">Chaperone</keyword>
<keyword id="KW-0963">Cytoplasm</keyword>
<keyword id="KW-0235">DNA replication</keyword>
<keyword id="KW-0479">Metal-binding</keyword>
<keyword id="KW-1185">Reference proteome</keyword>
<keyword id="KW-0677">Repeat</keyword>
<keyword id="KW-0346">Stress response</keyword>
<keyword id="KW-0862">Zinc</keyword>
<keyword id="KW-0863">Zinc-finger</keyword>
<dbReference type="EMBL" id="AY596297">
    <property type="protein sequence ID" value="AAV48024.1"/>
    <property type="molecule type" value="Genomic_DNA"/>
</dbReference>
<dbReference type="RefSeq" id="WP_004964030.1">
    <property type="nucleotide sequence ID" value="NZ_CP039138.1"/>
</dbReference>
<dbReference type="SMR" id="Q5UXH9"/>
<dbReference type="STRING" id="272569.rrnAC3334"/>
<dbReference type="PaxDb" id="272569-rrnAC3334"/>
<dbReference type="EnsemblBacteria" id="AAV48024">
    <property type="protein sequence ID" value="AAV48024"/>
    <property type="gene ID" value="rrnAC3334"/>
</dbReference>
<dbReference type="GeneID" id="64823421"/>
<dbReference type="KEGG" id="hma:rrnAC3334"/>
<dbReference type="PATRIC" id="fig|272569.17.peg.3861"/>
<dbReference type="eggNOG" id="arCOG02846">
    <property type="taxonomic scope" value="Archaea"/>
</dbReference>
<dbReference type="HOGENOM" id="CLU_017633_0_7_2"/>
<dbReference type="Proteomes" id="UP000001169">
    <property type="component" value="Chromosome I"/>
</dbReference>
<dbReference type="GO" id="GO:0005737">
    <property type="term" value="C:cytoplasm"/>
    <property type="evidence" value="ECO:0007669"/>
    <property type="project" value="UniProtKB-SubCell"/>
</dbReference>
<dbReference type="GO" id="GO:0005524">
    <property type="term" value="F:ATP binding"/>
    <property type="evidence" value="ECO:0007669"/>
    <property type="project" value="InterPro"/>
</dbReference>
<dbReference type="GO" id="GO:0031072">
    <property type="term" value="F:heat shock protein binding"/>
    <property type="evidence" value="ECO:0007669"/>
    <property type="project" value="InterPro"/>
</dbReference>
<dbReference type="GO" id="GO:0051082">
    <property type="term" value="F:unfolded protein binding"/>
    <property type="evidence" value="ECO:0007669"/>
    <property type="project" value="UniProtKB-UniRule"/>
</dbReference>
<dbReference type="GO" id="GO:0008270">
    <property type="term" value="F:zinc ion binding"/>
    <property type="evidence" value="ECO:0007669"/>
    <property type="project" value="UniProtKB-UniRule"/>
</dbReference>
<dbReference type="GO" id="GO:0051085">
    <property type="term" value="P:chaperone cofactor-dependent protein refolding"/>
    <property type="evidence" value="ECO:0007669"/>
    <property type="project" value="TreeGrafter"/>
</dbReference>
<dbReference type="GO" id="GO:0006260">
    <property type="term" value="P:DNA replication"/>
    <property type="evidence" value="ECO:0007669"/>
    <property type="project" value="UniProtKB-KW"/>
</dbReference>
<dbReference type="GO" id="GO:0042026">
    <property type="term" value="P:protein refolding"/>
    <property type="evidence" value="ECO:0007669"/>
    <property type="project" value="TreeGrafter"/>
</dbReference>
<dbReference type="GO" id="GO:0009408">
    <property type="term" value="P:response to heat"/>
    <property type="evidence" value="ECO:0007669"/>
    <property type="project" value="InterPro"/>
</dbReference>
<dbReference type="CDD" id="cd06257">
    <property type="entry name" value="DnaJ"/>
    <property type="match status" value="1"/>
</dbReference>
<dbReference type="CDD" id="cd10747">
    <property type="entry name" value="DnaJ_C"/>
    <property type="match status" value="1"/>
</dbReference>
<dbReference type="CDD" id="cd10719">
    <property type="entry name" value="DnaJ_zf"/>
    <property type="match status" value="1"/>
</dbReference>
<dbReference type="FunFam" id="2.60.260.20:FF:000005">
    <property type="entry name" value="Chaperone protein dnaJ 1, mitochondrial"/>
    <property type="match status" value="1"/>
</dbReference>
<dbReference type="FunFam" id="2.10.230.10:FF:000002">
    <property type="entry name" value="Molecular chaperone DnaJ"/>
    <property type="match status" value="1"/>
</dbReference>
<dbReference type="Gene3D" id="1.10.287.110">
    <property type="entry name" value="DnaJ domain"/>
    <property type="match status" value="1"/>
</dbReference>
<dbReference type="Gene3D" id="2.10.230.10">
    <property type="entry name" value="Heat shock protein DnaJ, cysteine-rich domain"/>
    <property type="match status" value="1"/>
</dbReference>
<dbReference type="Gene3D" id="2.60.260.20">
    <property type="entry name" value="Urease metallochaperone UreE, N-terminal domain"/>
    <property type="match status" value="2"/>
</dbReference>
<dbReference type="HAMAP" id="MF_01152">
    <property type="entry name" value="DnaJ"/>
    <property type="match status" value="1"/>
</dbReference>
<dbReference type="InterPro" id="IPR012724">
    <property type="entry name" value="DnaJ"/>
</dbReference>
<dbReference type="InterPro" id="IPR002939">
    <property type="entry name" value="DnaJ_C"/>
</dbReference>
<dbReference type="InterPro" id="IPR001623">
    <property type="entry name" value="DnaJ_domain"/>
</dbReference>
<dbReference type="InterPro" id="IPR008971">
    <property type="entry name" value="HSP40/DnaJ_pept-bd"/>
</dbReference>
<dbReference type="InterPro" id="IPR001305">
    <property type="entry name" value="HSP_DnaJ_Cys-rich_dom"/>
</dbReference>
<dbReference type="InterPro" id="IPR036410">
    <property type="entry name" value="HSP_DnaJ_Cys-rich_dom_sf"/>
</dbReference>
<dbReference type="InterPro" id="IPR036869">
    <property type="entry name" value="J_dom_sf"/>
</dbReference>
<dbReference type="NCBIfam" id="TIGR02349">
    <property type="entry name" value="DnaJ_bact"/>
    <property type="match status" value="1"/>
</dbReference>
<dbReference type="NCBIfam" id="NF008035">
    <property type="entry name" value="PRK10767.1"/>
    <property type="match status" value="1"/>
</dbReference>
<dbReference type="PANTHER" id="PTHR43096">
    <property type="entry name" value="DNAJ HOMOLOG 1, MITOCHONDRIAL-RELATED"/>
    <property type="match status" value="1"/>
</dbReference>
<dbReference type="PANTHER" id="PTHR43096:SF52">
    <property type="entry name" value="DNAJ HOMOLOG 1, MITOCHONDRIAL-RELATED"/>
    <property type="match status" value="1"/>
</dbReference>
<dbReference type="Pfam" id="PF00226">
    <property type="entry name" value="DnaJ"/>
    <property type="match status" value="1"/>
</dbReference>
<dbReference type="Pfam" id="PF01556">
    <property type="entry name" value="DnaJ_C"/>
    <property type="match status" value="1"/>
</dbReference>
<dbReference type="Pfam" id="PF00684">
    <property type="entry name" value="DnaJ_CXXCXGXG"/>
    <property type="match status" value="1"/>
</dbReference>
<dbReference type="PRINTS" id="PR00625">
    <property type="entry name" value="JDOMAIN"/>
</dbReference>
<dbReference type="SMART" id="SM00271">
    <property type="entry name" value="DnaJ"/>
    <property type="match status" value="1"/>
</dbReference>
<dbReference type="SUPFAM" id="SSF46565">
    <property type="entry name" value="Chaperone J-domain"/>
    <property type="match status" value="1"/>
</dbReference>
<dbReference type="SUPFAM" id="SSF57938">
    <property type="entry name" value="DnaJ/Hsp40 cysteine-rich domain"/>
    <property type="match status" value="1"/>
</dbReference>
<dbReference type="SUPFAM" id="SSF49493">
    <property type="entry name" value="HSP40/DnaJ peptide-binding domain"/>
    <property type="match status" value="2"/>
</dbReference>
<dbReference type="PROSITE" id="PS50076">
    <property type="entry name" value="DNAJ_2"/>
    <property type="match status" value="1"/>
</dbReference>
<dbReference type="PROSITE" id="PS51188">
    <property type="entry name" value="ZF_CR"/>
    <property type="match status" value="1"/>
</dbReference>
<evidence type="ECO:0000255" key="1">
    <source>
        <dbReference type="HAMAP-Rule" id="MF_01152"/>
    </source>
</evidence>
<evidence type="ECO:0000256" key="2">
    <source>
        <dbReference type="SAM" id="MobiDB-lite"/>
    </source>
</evidence>
<name>DNAJ_HALMA</name>
<accession>Q5UXH9</accession>
<proteinExistence type="inferred from homology"/>